<keyword id="KW-0002">3D-structure</keyword>
<keyword id="KW-1185">Reference proteome</keyword>
<keyword id="KW-0687">Ribonucleoprotein</keyword>
<keyword id="KW-0689">Ribosomal protein</keyword>
<gene>
    <name evidence="1" type="primary">rps3ae</name>
    <name type="ordered locus">TK1254</name>
</gene>
<accession>Q5JGM4</accession>
<dbReference type="EMBL" id="AP006878">
    <property type="protein sequence ID" value="BAD85443.1"/>
    <property type="molecule type" value="Genomic_DNA"/>
</dbReference>
<dbReference type="RefSeq" id="WP_011250205.1">
    <property type="nucleotide sequence ID" value="NC_006624.1"/>
</dbReference>
<dbReference type="PDB" id="6SKF">
    <property type="method" value="EM"/>
    <property type="resolution" value="2.95 A"/>
    <property type="chains" value="Ad=1-200"/>
</dbReference>
<dbReference type="PDB" id="6SKG">
    <property type="method" value="EM"/>
    <property type="resolution" value="2.65 A"/>
    <property type="chains" value="Ad=1-200"/>
</dbReference>
<dbReference type="PDB" id="6TH6">
    <property type="method" value="EM"/>
    <property type="resolution" value="2.55 A"/>
    <property type="chains" value="Ad=1-200"/>
</dbReference>
<dbReference type="PDBsum" id="6SKF"/>
<dbReference type="PDBsum" id="6SKG"/>
<dbReference type="PDBsum" id="6TH6"/>
<dbReference type="EMDB" id="EMD-10223"/>
<dbReference type="EMDB" id="EMD-10224"/>
<dbReference type="EMDB" id="EMD-10503"/>
<dbReference type="SMR" id="Q5JGM4"/>
<dbReference type="FunCoup" id="Q5JGM4">
    <property type="interactions" value="140"/>
</dbReference>
<dbReference type="IntAct" id="Q5JGM4">
    <property type="interactions" value="1"/>
</dbReference>
<dbReference type="MINT" id="Q5JGM4"/>
<dbReference type="STRING" id="69014.TK1254"/>
<dbReference type="EnsemblBacteria" id="BAD85443">
    <property type="protein sequence ID" value="BAD85443"/>
    <property type="gene ID" value="TK1254"/>
</dbReference>
<dbReference type="GeneID" id="78447771"/>
<dbReference type="KEGG" id="tko:TK1254"/>
<dbReference type="PATRIC" id="fig|69014.16.peg.1227"/>
<dbReference type="eggNOG" id="arCOG04186">
    <property type="taxonomic scope" value="Archaea"/>
</dbReference>
<dbReference type="HOGENOM" id="CLU_062507_1_0_2"/>
<dbReference type="InParanoid" id="Q5JGM4"/>
<dbReference type="OrthoDB" id="30639at2157"/>
<dbReference type="PhylomeDB" id="Q5JGM4"/>
<dbReference type="Proteomes" id="UP000000536">
    <property type="component" value="Chromosome"/>
</dbReference>
<dbReference type="GO" id="GO:0005829">
    <property type="term" value="C:cytosol"/>
    <property type="evidence" value="ECO:0000318"/>
    <property type="project" value="GO_Central"/>
</dbReference>
<dbReference type="GO" id="GO:1990904">
    <property type="term" value="C:ribonucleoprotein complex"/>
    <property type="evidence" value="ECO:0007669"/>
    <property type="project" value="UniProtKB-KW"/>
</dbReference>
<dbReference type="GO" id="GO:0005840">
    <property type="term" value="C:ribosome"/>
    <property type="evidence" value="ECO:0007669"/>
    <property type="project" value="UniProtKB-KW"/>
</dbReference>
<dbReference type="GO" id="GO:0003735">
    <property type="term" value="F:structural constituent of ribosome"/>
    <property type="evidence" value="ECO:0007669"/>
    <property type="project" value="InterPro"/>
</dbReference>
<dbReference type="GO" id="GO:0006412">
    <property type="term" value="P:translation"/>
    <property type="evidence" value="ECO:0007669"/>
    <property type="project" value="UniProtKB-UniRule"/>
</dbReference>
<dbReference type="HAMAP" id="MF_00359">
    <property type="entry name" value="Ribosomal_eS1"/>
    <property type="match status" value="1"/>
</dbReference>
<dbReference type="InterPro" id="IPR001593">
    <property type="entry name" value="Ribosomal_eS1"/>
</dbReference>
<dbReference type="InterPro" id="IPR030838">
    <property type="entry name" value="Ribosomal_eS1_arc"/>
</dbReference>
<dbReference type="InterPro" id="IPR018281">
    <property type="entry name" value="Ribosomal_eS1_CS"/>
</dbReference>
<dbReference type="NCBIfam" id="NF003142">
    <property type="entry name" value="PRK04057.1"/>
    <property type="match status" value="1"/>
</dbReference>
<dbReference type="PANTHER" id="PTHR11830">
    <property type="entry name" value="40S RIBOSOMAL PROTEIN S3A"/>
    <property type="match status" value="1"/>
</dbReference>
<dbReference type="Pfam" id="PF01015">
    <property type="entry name" value="Ribosomal_S3Ae"/>
    <property type="match status" value="1"/>
</dbReference>
<dbReference type="SMART" id="SM01397">
    <property type="entry name" value="Ribosomal_S3Ae"/>
    <property type="match status" value="1"/>
</dbReference>
<dbReference type="PROSITE" id="PS01191">
    <property type="entry name" value="RIBOSOMAL_S3AE"/>
    <property type="match status" value="1"/>
</dbReference>
<reference key="1">
    <citation type="journal article" date="2005" name="Genome Res.">
        <title>Complete genome sequence of the hyperthermophilic archaeon Thermococcus kodakaraensis KOD1 and comparison with Pyrococcus genomes.</title>
        <authorList>
            <person name="Fukui T."/>
            <person name="Atomi H."/>
            <person name="Kanai T."/>
            <person name="Matsumi R."/>
            <person name="Fujiwara S."/>
            <person name="Imanaka T."/>
        </authorList>
    </citation>
    <scope>NUCLEOTIDE SEQUENCE [LARGE SCALE GENOMIC DNA]</scope>
    <source>
        <strain>ATCC BAA-918 / JCM 12380 / KOD1</strain>
    </source>
</reference>
<reference evidence="4 5 6" key="2">
    <citation type="journal article" date="2020" name="Nature">
        <title>Dynamic RNA acetylation revealed by quantitative cross-evolutionary mapping.</title>
        <authorList>
            <person name="Sas-Chen A."/>
            <person name="Thomas J.M."/>
            <person name="Matzov D."/>
            <person name="Taoka M."/>
            <person name="Nance K.D."/>
            <person name="Nir R."/>
            <person name="Bryson K.M."/>
            <person name="Shachar R."/>
            <person name="Liman G.L.S."/>
            <person name="Burkhart B.W."/>
            <person name="Gamage S.T."/>
            <person name="Nobe Y."/>
            <person name="Briney C.A."/>
            <person name="Levy M.J."/>
            <person name="Fuchs R.T."/>
            <person name="Robb G.B."/>
            <person name="Hartmann J."/>
            <person name="Sharma S."/>
            <person name="Lin Q."/>
            <person name="Florens L."/>
            <person name="Washburn M.P."/>
            <person name="Isobe T."/>
            <person name="Santangelo T.J."/>
            <person name="Shalev-Benami M."/>
            <person name="Meier J.L."/>
            <person name="Schwartz S."/>
        </authorList>
    </citation>
    <scope>STRUCTURE BY ELECTRON MICROSCOPY (2.55 ANGSTROMS) IN 70S RIBOSOME</scope>
    <scope>SUBUNIT</scope>
    <source>
        <strain>ATCC BAA-918 / TS559</strain>
    </source>
</reference>
<organism>
    <name type="scientific">Thermococcus kodakarensis (strain ATCC BAA-918 / JCM 12380 / KOD1)</name>
    <name type="common">Pyrococcus kodakaraensis (strain KOD1)</name>
    <dbReference type="NCBI Taxonomy" id="69014"/>
    <lineage>
        <taxon>Archaea</taxon>
        <taxon>Methanobacteriati</taxon>
        <taxon>Methanobacteriota</taxon>
        <taxon>Thermococci</taxon>
        <taxon>Thermococcales</taxon>
        <taxon>Thermococcaceae</taxon>
        <taxon>Thermococcus</taxon>
    </lineage>
</organism>
<feature type="chain" id="PRO_0000153559" description="Small ribosomal subunit protein eS1">
    <location>
        <begin position="1"/>
        <end position="200"/>
    </location>
</feature>
<proteinExistence type="evidence at protein level"/>
<name>RS3A_THEKO</name>
<comment type="subunit">
    <text evidence="2">Part of the 30S ribosomal subunit.</text>
</comment>
<comment type="similarity">
    <text evidence="1">Belongs to the eukaryotic ribosomal protein eS1 family.</text>
</comment>
<protein>
    <recommendedName>
        <fullName evidence="1">Small ribosomal subunit protein eS1</fullName>
    </recommendedName>
    <alternativeName>
        <fullName evidence="3">30S ribosomal protein S3Ae</fullName>
    </alternativeName>
    <alternativeName>
        <fullName evidence="1">Ribosomal protein S1e</fullName>
    </alternativeName>
</protein>
<evidence type="ECO:0000255" key="1">
    <source>
        <dbReference type="HAMAP-Rule" id="MF_00359"/>
    </source>
</evidence>
<evidence type="ECO:0000269" key="2">
    <source>
    </source>
</evidence>
<evidence type="ECO:0000305" key="3"/>
<evidence type="ECO:0007744" key="4">
    <source>
        <dbReference type="PDB" id="6SKF"/>
    </source>
</evidence>
<evidence type="ECO:0007744" key="5">
    <source>
        <dbReference type="PDB" id="6SKG"/>
    </source>
</evidence>
<evidence type="ECO:0007744" key="6">
    <source>
        <dbReference type="PDB" id="6TH6"/>
    </source>
</evidence>
<sequence length="200" mass="23022">MARGNPRKRAAAAKDKWKMKEWYIVYAPDFFGSKEIGLTPADDPEKVIGRVIETTLKDLTGDFTKGHVKLYFQVYDVKGQNAYTKFKGHTLARSYIRSLVRRRTTRVDGIFNITTKDGYKLRVMGMVIAYRRIQTSQERAIRKIIQDIIYKKAEELNFADFVLQSVNGQIASEIAKEARKIYPIKRAEVRKIKVLAEPSA</sequence>